<feature type="chain" id="PRO_0000343451" description="Major urinary protein 2">
    <location>
        <begin position="1" status="less than"/>
        <end position="10" status="greater than"/>
    </location>
</feature>
<feature type="non-terminal residue" evidence="3">
    <location>
        <position position="1"/>
    </location>
</feature>
<feature type="non-terminal residue" evidence="3">
    <location>
        <position position="10"/>
    </location>
</feature>
<dbReference type="InParanoid" id="P85844"/>
<dbReference type="Proteomes" id="UP000002494">
    <property type="component" value="Unplaced"/>
</dbReference>
<dbReference type="GO" id="GO:0005576">
    <property type="term" value="C:extracellular region"/>
    <property type="evidence" value="ECO:0007669"/>
    <property type="project" value="UniProtKB-SubCell"/>
</dbReference>
<dbReference type="GO" id="GO:0005550">
    <property type="term" value="F:pheromone binding"/>
    <property type="evidence" value="ECO:0007669"/>
    <property type="project" value="UniProtKB-KW"/>
</dbReference>
<comment type="function">
    <text evidence="4">Binds pheromones that are released from drying urine of males. These pheromones affect the sexual behavior of females.</text>
</comment>
<comment type="subcellular location">
    <subcellularLocation>
        <location evidence="4">Secreted</location>
    </subcellularLocation>
</comment>
<comment type="similarity">
    <text evidence="1">Belongs to the calycin superfamily. Lipocalin family.</text>
</comment>
<accession>P85844</accession>
<protein>
    <recommendedName>
        <fullName>Major urinary protein 2</fullName>
        <shortName>MUP 2</shortName>
    </recommendedName>
</protein>
<name>MUP2_RAT</name>
<organism>
    <name type="scientific">Rattus norvegicus</name>
    <name type="common">Rat</name>
    <dbReference type="NCBI Taxonomy" id="10116"/>
    <lineage>
        <taxon>Eukaryota</taxon>
        <taxon>Metazoa</taxon>
        <taxon>Chordata</taxon>
        <taxon>Craniata</taxon>
        <taxon>Vertebrata</taxon>
        <taxon>Euteleostomi</taxon>
        <taxon>Mammalia</taxon>
        <taxon>Eutheria</taxon>
        <taxon>Euarchontoglires</taxon>
        <taxon>Glires</taxon>
        <taxon>Rodentia</taxon>
        <taxon>Myomorpha</taxon>
        <taxon>Muroidea</taxon>
        <taxon>Muridae</taxon>
        <taxon>Murinae</taxon>
        <taxon>Rattus</taxon>
    </lineage>
</organism>
<sequence length="10" mass="1174">NNVDKLNGDW</sequence>
<keyword id="KW-0903">Direct protein sequencing</keyword>
<keyword id="KW-0590">Pheromone-binding</keyword>
<keyword id="KW-1185">Reference proteome</keyword>
<keyword id="KW-0964">Secreted</keyword>
<keyword id="KW-0813">Transport</keyword>
<proteinExistence type="evidence at protein level"/>
<evidence type="ECO:0000255" key="1"/>
<evidence type="ECO:0000269" key="2">
    <source ref="1"/>
</evidence>
<evidence type="ECO:0000303" key="3">
    <source ref="1"/>
</evidence>
<evidence type="ECO:0000305" key="4"/>
<reference evidence="4" key="1">
    <citation type="submission" date="2008-05" db="UniProtKB">
        <title>Identification, purification and sequencing of pheromone-carrying protein in rat's preputial gland and study of its behavioural significance.</title>
        <authorList>
            <person name="Ponmanickam P."/>
            <person name="Archunan G."/>
            <person name="Kannan S."/>
        </authorList>
    </citation>
    <scope>PROTEIN SEQUENCE</scope>
    <source>
        <strain evidence="2">Wistar</strain>
        <tissue evidence="2">Preputial gland</tissue>
    </source>
</reference>